<gene>
    <name evidence="2" type="primary">Sgf11</name>
    <name type="ORF">GD12333</name>
</gene>
<proteinExistence type="inferred from homology"/>
<reference key="1">
    <citation type="journal article" date="2007" name="Nature">
        <title>Evolution of genes and genomes on the Drosophila phylogeny.</title>
        <authorList>
            <consortium name="Drosophila 12 genomes consortium"/>
        </authorList>
    </citation>
    <scope>NUCLEOTIDE SEQUENCE [LARGE SCALE GENOMIC DNA]</scope>
</reference>
<name>SGF11_DROSI</name>
<keyword id="KW-0010">Activator</keyword>
<keyword id="KW-0156">Chromatin regulator</keyword>
<keyword id="KW-0963">Cytoplasm</keyword>
<keyword id="KW-0479">Metal-binding</keyword>
<keyword id="KW-0509">mRNA transport</keyword>
<keyword id="KW-0539">Nucleus</keyword>
<keyword id="KW-0597">Phosphoprotein</keyword>
<keyword id="KW-0653">Protein transport</keyword>
<keyword id="KW-1185">Reference proteome</keyword>
<keyword id="KW-0804">Transcription</keyword>
<keyword id="KW-0805">Transcription regulation</keyword>
<keyword id="KW-0811">Translocation</keyword>
<keyword id="KW-0813">Transport</keyword>
<keyword id="KW-0862">Zinc</keyword>
<keyword id="KW-0863">Zinc-finger</keyword>
<comment type="function">
    <text evidence="2">Component of the transcription regulatory histone acetylation (HAT) complex SAGA, a multiprotein complex that activates transcription by remodeling chromatin and mediating histone acetylation and deubiquitination. Within the SAGA complex, participates in a subcomplex that specifically deubiquitinates histone H2B. The SAGA complex is recruited to specific gene promoters by activators, where it is required for transcription. Required for nuclear receptor-mediated transactivation. Binds independently on SAGA to promoters in an RNA-dependent manner. Binds to mRNA and is essential for total mRNA export from the nucleus. Required to counteract heterochromatin silencing. Controls the development of neuronal connectivity in visual system by being required for accurate axon targeting in the optic lobe. Required for expression of ecdysone-induced genes such as br/broad.</text>
</comment>
<comment type="subunit">
    <text evidence="2">Component of some SAGA transcription coactivator-HAT complexes, at least composed of Ada2b, not/nonstop, Pcaf/Gcn5, Sgf11 and Spt3. Within the SAGA complex, Sgf11, e(y)2, and not/nonstop form an additional subcomplex of SAGA called the DUB module (deubiquitination module). Interacts directly with not/nonstop. Interacts with the AMEX complex component xmas-2. Interacts with Cbp80; important for promoter recruitment of Sgf11 that is not associated with the DUB module.</text>
</comment>
<comment type="subcellular location">
    <subcellularLocation>
        <location evidence="2">Nucleus</location>
        <location evidence="2">Nucleoplasm</location>
    </subcellularLocation>
    <subcellularLocation>
        <location evidence="2">Cytoplasm</location>
    </subcellularLocation>
    <text evidence="2">Localizes to nuclear periphery, in contact with the nuclear pore complex (NPC).</text>
</comment>
<comment type="domain">
    <text evidence="2">The long N-terminal helix forms part of the 'assembly lobe' of the SAGA deubiquitination module.</text>
</comment>
<comment type="domain">
    <text evidence="2">The C-terminal SGF11-type zinc-finger domain together with the C-terminal catalytic domain of not/nonstop forms the 'catalytic lobe' of the SAGA deubiquitination module.</text>
</comment>
<comment type="similarity">
    <text evidence="2">Belongs to the SGF11 family.</text>
</comment>
<comment type="sequence caution" evidence="4">
    <conflict type="erroneous initiation">
        <sequence resource="EMBL-CDS" id="EDX10978"/>
    </conflict>
</comment>
<dbReference type="EMBL" id="CM000363">
    <property type="protein sequence ID" value="EDX10978.1"/>
    <property type="status" value="ALT_INIT"/>
    <property type="molecule type" value="Genomic_DNA"/>
</dbReference>
<dbReference type="SMR" id="B4QPV0"/>
<dbReference type="STRING" id="7240.B4QPV0"/>
<dbReference type="EnsemblMetazoa" id="FBtr0212243">
    <property type="protein sequence ID" value="FBpp0210735"/>
    <property type="gene ID" value="FBgn0184065"/>
</dbReference>
<dbReference type="EnsemblMetazoa" id="XM_002085357.4">
    <property type="protein sequence ID" value="XP_002085393.2"/>
    <property type="gene ID" value="LOC6738589"/>
</dbReference>
<dbReference type="GeneID" id="6738589"/>
<dbReference type="CTD" id="40035"/>
<dbReference type="OrthoDB" id="21557at2759"/>
<dbReference type="Proteomes" id="UP000000304">
    <property type="component" value="Chromosome 3L"/>
</dbReference>
<dbReference type="Bgee" id="FBgn0184065">
    <property type="expression patterns" value="Expressed in embryo and 3 other cell types or tissues"/>
</dbReference>
<dbReference type="GO" id="GO:0005737">
    <property type="term" value="C:cytoplasm"/>
    <property type="evidence" value="ECO:0007669"/>
    <property type="project" value="UniProtKB-SubCell"/>
</dbReference>
<dbReference type="GO" id="GO:0071819">
    <property type="term" value="C:DUBm complex"/>
    <property type="evidence" value="ECO:0007669"/>
    <property type="project" value="UniProtKB-UniRule"/>
</dbReference>
<dbReference type="GO" id="GO:0005643">
    <property type="term" value="C:nuclear pore"/>
    <property type="evidence" value="ECO:0007669"/>
    <property type="project" value="UniProtKB-UniRule"/>
</dbReference>
<dbReference type="GO" id="GO:0005654">
    <property type="term" value="C:nucleoplasm"/>
    <property type="evidence" value="ECO:0007669"/>
    <property type="project" value="UniProtKB-SubCell"/>
</dbReference>
<dbReference type="GO" id="GO:0000124">
    <property type="term" value="C:SAGA complex"/>
    <property type="evidence" value="ECO:0000250"/>
    <property type="project" value="UniProtKB"/>
</dbReference>
<dbReference type="GO" id="GO:0003713">
    <property type="term" value="F:transcription coactivator activity"/>
    <property type="evidence" value="ECO:0007669"/>
    <property type="project" value="UniProtKB-UniRule"/>
</dbReference>
<dbReference type="GO" id="GO:0008270">
    <property type="term" value="F:zinc ion binding"/>
    <property type="evidence" value="ECO:0007669"/>
    <property type="project" value="UniProtKB-UniRule"/>
</dbReference>
<dbReference type="GO" id="GO:0006325">
    <property type="term" value="P:chromatin organization"/>
    <property type="evidence" value="ECO:0000250"/>
    <property type="project" value="UniProtKB"/>
</dbReference>
<dbReference type="GO" id="GO:0006406">
    <property type="term" value="P:mRNA export from nucleus"/>
    <property type="evidence" value="ECO:0007669"/>
    <property type="project" value="UniProtKB-UniRule"/>
</dbReference>
<dbReference type="GO" id="GO:0045893">
    <property type="term" value="P:positive regulation of DNA-templated transcription"/>
    <property type="evidence" value="ECO:0000250"/>
    <property type="project" value="UniProtKB"/>
</dbReference>
<dbReference type="GO" id="GO:0015031">
    <property type="term" value="P:protein transport"/>
    <property type="evidence" value="ECO:0007669"/>
    <property type="project" value="UniProtKB-KW"/>
</dbReference>
<dbReference type="GO" id="GO:0006357">
    <property type="term" value="P:regulation of transcription by RNA polymerase II"/>
    <property type="evidence" value="ECO:0007669"/>
    <property type="project" value="TreeGrafter"/>
</dbReference>
<dbReference type="FunFam" id="3.30.160.60:FF:000118">
    <property type="entry name" value="Ataxin-7-like protein 3"/>
    <property type="match status" value="1"/>
</dbReference>
<dbReference type="Gene3D" id="3.30.160.60">
    <property type="entry name" value="Classic Zinc Finger"/>
    <property type="match status" value="1"/>
</dbReference>
<dbReference type="HAMAP" id="MF_03047">
    <property type="entry name" value="Sgf11"/>
    <property type="match status" value="1"/>
</dbReference>
<dbReference type="InterPro" id="IPR013246">
    <property type="entry name" value="SAGA_su_Sgf11"/>
</dbReference>
<dbReference type="InterPro" id="IPR051078">
    <property type="entry name" value="SGF11"/>
</dbReference>
<dbReference type="PANTHER" id="PTHR46367">
    <property type="entry name" value="ATAXIN-7-LIKE PROTEIN 3"/>
    <property type="match status" value="1"/>
</dbReference>
<dbReference type="PANTHER" id="PTHR46367:SF1">
    <property type="entry name" value="ATAXIN-7-LIKE PROTEIN 3"/>
    <property type="match status" value="1"/>
</dbReference>
<dbReference type="Pfam" id="PF08209">
    <property type="entry name" value="Sgf11"/>
    <property type="match status" value="1"/>
</dbReference>
<protein>
    <recommendedName>
        <fullName evidence="2">SAGA-associated factor 11 homolog</fullName>
    </recommendedName>
</protein>
<sequence>MSAANMPTTTGAQGSGNQVPTTSTTIVNHFRELIKEPKNLDEAANYLFQTLLDDAVVGIFNETHHLRKSGNLAALDGVPEDSTYRMCEMPNLDIFGISTAKKPMDCTCPNCDRLVAAARFAPHLEKCMGMGRISSRIASRRLATKEGATSAHLHSSGNTGGTDDEDDVDWSSDKRRKKSNQNSRNNGSKKNNGKTF</sequence>
<evidence type="ECO:0000250" key="1"/>
<evidence type="ECO:0000255" key="2">
    <source>
        <dbReference type="HAMAP-Rule" id="MF_03047"/>
    </source>
</evidence>
<evidence type="ECO:0000256" key="3">
    <source>
        <dbReference type="SAM" id="MobiDB-lite"/>
    </source>
</evidence>
<evidence type="ECO:0000305" key="4"/>
<accession>B4QPV0</accession>
<organism>
    <name type="scientific">Drosophila simulans</name>
    <name type="common">Fruit fly</name>
    <dbReference type="NCBI Taxonomy" id="7240"/>
    <lineage>
        <taxon>Eukaryota</taxon>
        <taxon>Metazoa</taxon>
        <taxon>Ecdysozoa</taxon>
        <taxon>Arthropoda</taxon>
        <taxon>Hexapoda</taxon>
        <taxon>Insecta</taxon>
        <taxon>Pterygota</taxon>
        <taxon>Neoptera</taxon>
        <taxon>Endopterygota</taxon>
        <taxon>Diptera</taxon>
        <taxon>Brachycera</taxon>
        <taxon>Muscomorpha</taxon>
        <taxon>Ephydroidea</taxon>
        <taxon>Drosophilidae</taxon>
        <taxon>Drosophila</taxon>
        <taxon>Sophophora</taxon>
    </lineage>
</organism>
<feature type="chain" id="PRO_0000367530" description="SAGA-associated factor 11 homolog">
    <location>
        <begin position="1"/>
        <end position="196"/>
    </location>
</feature>
<feature type="zinc finger region" description="SGF11-type" evidence="2">
    <location>
        <begin position="106"/>
        <end position="127"/>
    </location>
</feature>
<feature type="region of interest" description="Disordered" evidence="3">
    <location>
        <begin position="1"/>
        <end position="22"/>
    </location>
</feature>
<feature type="region of interest" description="Disordered" evidence="3">
    <location>
        <begin position="141"/>
        <end position="196"/>
    </location>
</feature>
<feature type="compositionally biased region" description="Low complexity" evidence="3">
    <location>
        <begin position="180"/>
        <end position="196"/>
    </location>
</feature>
<feature type="modified residue" description="Phosphoserine" evidence="1">
    <location>
        <position position="172"/>
    </location>
</feature>